<gene>
    <name type="ordered locus">At3g10510</name>
    <name type="ORF">F13M14.21</name>
    <name type="ORF">F18K10.8</name>
</gene>
<name>FBK53_ARATH</name>
<feature type="chain" id="PRO_0000283213" description="Putative F-box/kelch-repeat protein At3g10510">
    <location>
        <begin position="1"/>
        <end position="371"/>
    </location>
</feature>
<feature type="domain" description="F-box">
    <location>
        <begin position="13"/>
        <end position="61"/>
    </location>
</feature>
<feature type="repeat" description="Kelch 1">
    <location>
        <begin position="123"/>
        <end position="165"/>
    </location>
</feature>
<feature type="repeat" description="Kelch 2">
    <location>
        <begin position="178"/>
        <end position="229"/>
    </location>
</feature>
<feature type="repeat" description="Kelch 3">
    <location>
        <begin position="257"/>
        <end position="305"/>
    </location>
</feature>
<feature type="sequence conflict" description="In Ref. 1; AAF76352." evidence="1" ref="1">
    <original>R</original>
    <variation>K</variation>
    <location>
        <position position="225"/>
    </location>
</feature>
<sequence>MLSEDEKEKTPPSVMTSIPDDVIMECIAPRVPRYNHSMLSLVSKQFRSLVASPRLYKTRSLLGCTEDCVYVLIEDCILEVARWYSLNRRTKRNMPGTVENRLVLISSLPPMPTAASYVVVGSNIFVMGGRYDWNVEEWEAQPPSSIALCIDCRTHTTRLVADMPVGLMTNVSKVIDEKIYIVGRVWASATIVEFDLRTEKWADGTKPGWEADDRWLTSLSTTAGRGPSSFENNCDHKLMEDILMDKEEIKHYHLFDNECVMGNILYVYDRHKYILRTYDPKQRTWGVVKGLEKLPLGGDESYIVSRGKMLILFLIVVLEYDDDASFQKRELWCAEITVERREEGEIWGKVECCDLLLEGGLIIGSCLVVTL</sequence>
<dbReference type="EMBL" id="AC011560">
    <property type="protein sequence ID" value="AAG51385.1"/>
    <property type="molecule type" value="Genomic_DNA"/>
</dbReference>
<dbReference type="EMBL" id="AC013428">
    <property type="protein sequence ID" value="AAF76352.1"/>
    <property type="molecule type" value="Genomic_DNA"/>
</dbReference>
<dbReference type="EMBL" id="CP002686">
    <property type="protein sequence ID" value="AEE74918.1"/>
    <property type="molecule type" value="Genomic_DNA"/>
</dbReference>
<dbReference type="RefSeq" id="NP_187662.1">
    <property type="nucleotide sequence ID" value="NM_111886.1"/>
</dbReference>
<dbReference type="SMR" id="Q9CAE9"/>
<dbReference type="GlyGen" id="Q9CAE9">
    <property type="glycosylation" value="1 site"/>
</dbReference>
<dbReference type="PaxDb" id="3702-AT3G10510.1"/>
<dbReference type="EnsemblPlants" id="AT3G10510.1">
    <property type="protein sequence ID" value="AT3G10510.1"/>
    <property type="gene ID" value="AT3G10510"/>
</dbReference>
<dbReference type="GeneID" id="820215"/>
<dbReference type="Gramene" id="AT3G10510.1">
    <property type="protein sequence ID" value="AT3G10510.1"/>
    <property type="gene ID" value="AT3G10510"/>
</dbReference>
<dbReference type="KEGG" id="ath:AT3G10510"/>
<dbReference type="Araport" id="AT3G10510"/>
<dbReference type="TAIR" id="AT3G10510"/>
<dbReference type="eggNOG" id="KOG1072">
    <property type="taxonomic scope" value="Eukaryota"/>
</dbReference>
<dbReference type="HOGENOM" id="CLU_032521_1_2_1"/>
<dbReference type="InParanoid" id="Q9CAE9"/>
<dbReference type="OMA" id="FTYEGRT"/>
<dbReference type="PhylomeDB" id="Q9CAE9"/>
<dbReference type="PRO" id="PR:Q9CAE9"/>
<dbReference type="Proteomes" id="UP000006548">
    <property type="component" value="Chromosome 3"/>
</dbReference>
<dbReference type="ExpressionAtlas" id="Q9CAE9">
    <property type="expression patterns" value="baseline and differential"/>
</dbReference>
<dbReference type="CDD" id="cd22152">
    <property type="entry name" value="F-box_AtAFR-like"/>
    <property type="match status" value="1"/>
</dbReference>
<dbReference type="Gene3D" id="2.120.10.80">
    <property type="entry name" value="Kelch-type beta propeller"/>
    <property type="match status" value="1"/>
</dbReference>
<dbReference type="InterPro" id="IPR036047">
    <property type="entry name" value="F-box-like_dom_sf"/>
</dbReference>
<dbReference type="InterPro" id="IPR050354">
    <property type="entry name" value="F-box/kelch-repeat_ARATH"/>
</dbReference>
<dbReference type="InterPro" id="IPR001810">
    <property type="entry name" value="F-box_dom"/>
</dbReference>
<dbReference type="InterPro" id="IPR015915">
    <property type="entry name" value="Kelch-typ_b-propeller"/>
</dbReference>
<dbReference type="PANTHER" id="PTHR24414">
    <property type="entry name" value="F-BOX/KELCH-REPEAT PROTEIN SKIP4"/>
    <property type="match status" value="1"/>
</dbReference>
<dbReference type="PANTHER" id="PTHR24414:SF184">
    <property type="entry name" value="GALACTOSE OXIDASE_KELCH REPEAT SUPERFAMILY PROTEIN"/>
    <property type="match status" value="1"/>
</dbReference>
<dbReference type="Pfam" id="PF00646">
    <property type="entry name" value="F-box"/>
    <property type="match status" value="1"/>
</dbReference>
<dbReference type="Pfam" id="PF25210">
    <property type="entry name" value="Kelch_FKB95"/>
    <property type="match status" value="1"/>
</dbReference>
<dbReference type="SUPFAM" id="SSF81383">
    <property type="entry name" value="F-box domain"/>
    <property type="match status" value="1"/>
</dbReference>
<dbReference type="SUPFAM" id="SSF117281">
    <property type="entry name" value="Kelch motif"/>
    <property type="match status" value="1"/>
</dbReference>
<protein>
    <recommendedName>
        <fullName>Putative F-box/kelch-repeat protein At3g10510</fullName>
    </recommendedName>
</protein>
<accession>Q9CAE9</accession>
<accession>Q9LPP5</accession>
<organism>
    <name type="scientific">Arabidopsis thaliana</name>
    <name type="common">Mouse-ear cress</name>
    <dbReference type="NCBI Taxonomy" id="3702"/>
    <lineage>
        <taxon>Eukaryota</taxon>
        <taxon>Viridiplantae</taxon>
        <taxon>Streptophyta</taxon>
        <taxon>Embryophyta</taxon>
        <taxon>Tracheophyta</taxon>
        <taxon>Spermatophyta</taxon>
        <taxon>Magnoliopsida</taxon>
        <taxon>eudicotyledons</taxon>
        <taxon>Gunneridae</taxon>
        <taxon>Pentapetalae</taxon>
        <taxon>rosids</taxon>
        <taxon>malvids</taxon>
        <taxon>Brassicales</taxon>
        <taxon>Brassicaceae</taxon>
        <taxon>Camelineae</taxon>
        <taxon>Arabidopsis</taxon>
    </lineage>
</organism>
<reference key="1">
    <citation type="journal article" date="2000" name="Nature">
        <title>Sequence and analysis of chromosome 3 of the plant Arabidopsis thaliana.</title>
        <authorList>
            <person name="Salanoubat M."/>
            <person name="Lemcke K."/>
            <person name="Rieger M."/>
            <person name="Ansorge W."/>
            <person name="Unseld M."/>
            <person name="Fartmann B."/>
            <person name="Valle G."/>
            <person name="Bloecker H."/>
            <person name="Perez-Alonso M."/>
            <person name="Obermaier B."/>
            <person name="Delseny M."/>
            <person name="Boutry M."/>
            <person name="Grivell L.A."/>
            <person name="Mache R."/>
            <person name="Puigdomenech P."/>
            <person name="De Simone V."/>
            <person name="Choisne N."/>
            <person name="Artiguenave F."/>
            <person name="Robert C."/>
            <person name="Brottier P."/>
            <person name="Wincker P."/>
            <person name="Cattolico L."/>
            <person name="Weissenbach J."/>
            <person name="Saurin W."/>
            <person name="Quetier F."/>
            <person name="Schaefer M."/>
            <person name="Mueller-Auer S."/>
            <person name="Gabel C."/>
            <person name="Fuchs M."/>
            <person name="Benes V."/>
            <person name="Wurmbach E."/>
            <person name="Drzonek H."/>
            <person name="Erfle H."/>
            <person name="Jordan N."/>
            <person name="Bangert S."/>
            <person name="Wiedelmann R."/>
            <person name="Kranz H."/>
            <person name="Voss H."/>
            <person name="Holland R."/>
            <person name="Brandt P."/>
            <person name="Nyakatura G."/>
            <person name="Vezzi A."/>
            <person name="D'Angelo M."/>
            <person name="Pallavicini A."/>
            <person name="Toppo S."/>
            <person name="Simionati B."/>
            <person name="Conrad A."/>
            <person name="Hornischer K."/>
            <person name="Kauer G."/>
            <person name="Loehnert T.-H."/>
            <person name="Nordsiek G."/>
            <person name="Reichelt J."/>
            <person name="Scharfe M."/>
            <person name="Schoen O."/>
            <person name="Bargues M."/>
            <person name="Terol J."/>
            <person name="Climent J."/>
            <person name="Navarro P."/>
            <person name="Collado C."/>
            <person name="Perez-Perez A."/>
            <person name="Ottenwaelder B."/>
            <person name="Duchemin D."/>
            <person name="Cooke R."/>
            <person name="Laudie M."/>
            <person name="Berger-Llauro C."/>
            <person name="Purnelle B."/>
            <person name="Masuy D."/>
            <person name="de Haan M."/>
            <person name="Maarse A.C."/>
            <person name="Alcaraz J.-P."/>
            <person name="Cottet A."/>
            <person name="Casacuberta E."/>
            <person name="Monfort A."/>
            <person name="Argiriou A."/>
            <person name="Flores M."/>
            <person name="Liguori R."/>
            <person name="Vitale D."/>
            <person name="Mannhaupt G."/>
            <person name="Haase D."/>
            <person name="Schoof H."/>
            <person name="Rudd S."/>
            <person name="Zaccaria P."/>
            <person name="Mewes H.-W."/>
            <person name="Mayer K.F.X."/>
            <person name="Kaul S."/>
            <person name="Town C.D."/>
            <person name="Koo H.L."/>
            <person name="Tallon L.J."/>
            <person name="Jenkins J."/>
            <person name="Rooney T."/>
            <person name="Rizzo M."/>
            <person name="Walts A."/>
            <person name="Utterback T."/>
            <person name="Fujii C.Y."/>
            <person name="Shea T.P."/>
            <person name="Creasy T.H."/>
            <person name="Haas B."/>
            <person name="Maiti R."/>
            <person name="Wu D."/>
            <person name="Peterson J."/>
            <person name="Van Aken S."/>
            <person name="Pai G."/>
            <person name="Militscher J."/>
            <person name="Sellers P."/>
            <person name="Gill J.E."/>
            <person name="Feldblyum T.V."/>
            <person name="Preuss D."/>
            <person name="Lin X."/>
            <person name="Nierman W.C."/>
            <person name="Salzberg S.L."/>
            <person name="White O."/>
            <person name="Venter J.C."/>
            <person name="Fraser C.M."/>
            <person name="Kaneko T."/>
            <person name="Nakamura Y."/>
            <person name="Sato S."/>
            <person name="Kato T."/>
            <person name="Asamizu E."/>
            <person name="Sasamoto S."/>
            <person name="Kimura T."/>
            <person name="Idesawa K."/>
            <person name="Kawashima K."/>
            <person name="Kishida Y."/>
            <person name="Kiyokawa C."/>
            <person name="Kohara M."/>
            <person name="Matsumoto M."/>
            <person name="Matsuno A."/>
            <person name="Muraki A."/>
            <person name="Nakayama S."/>
            <person name="Nakazaki N."/>
            <person name="Shinpo S."/>
            <person name="Takeuchi C."/>
            <person name="Wada T."/>
            <person name="Watanabe A."/>
            <person name="Yamada M."/>
            <person name="Yasuda M."/>
            <person name="Tabata S."/>
        </authorList>
    </citation>
    <scope>NUCLEOTIDE SEQUENCE [LARGE SCALE GENOMIC DNA]</scope>
    <source>
        <strain>cv. Columbia</strain>
    </source>
</reference>
<reference key="2">
    <citation type="journal article" date="2017" name="Plant J.">
        <title>Araport11: a complete reannotation of the Arabidopsis thaliana reference genome.</title>
        <authorList>
            <person name="Cheng C.Y."/>
            <person name="Krishnakumar V."/>
            <person name="Chan A.P."/>
            <person name="Thibaud-Nissen F."/>
            <person name="Schobel S."/>
            <person name="Town C.D."/>
        </authorList>
    </citation>
    <scope>GENOME REANNOTATION</scope>
    <source>
        <strain>cv. Columbia</strain>
    </source>
</reference>
<keyword id="KW-0880">Kelch repeat</keyword>
<keyword id="KW-1185">Reference proteome</keyword>
<keyword id="KW-0677">Repeat</keyword>
<evidence type="ECO:0000305" key="1"/>
<proteinExistence type="predicted"/>